<name>FABA_SHESH</name>
<keyword id="KW-0963">Cytoplasm</keyword>
<keyword id="KW-0275">Fatty acid biosynthesis</keyword>
<keyword id="KW-0276">Fatty acid metabolism</keyword>
<keyword id="KW-0413">Isomerase</keyword>
<keyword id="KW-0444">Lipid biosynthesis</keyword>
<keyword id="KW-0443">Lipid metabolism</keyword>
<keyword id="KW-0456">Lyase</keyword>
<keyword id="KW-1185">Reference proteome</keyword>
<accession>A8FW54</accession>
<proteinExistence type="inferred from homology"/>
<feature type="chain" id="PRO_1000201217" description="3-hydroxydecanoyl-[acyl-carrier-protein] dehydratase">
    <location>
        <begin position="1"/>
        <end position="171"/>
    </location>
</feature>
<feature type="active site" evidence="1">
    <location>
        <position position="70"/>
    </location>
</feature>
<sequence>MSKANSFNKKDLIACGHGQLFGKNSPRLPIDNMLMMDRITKINADGGEFGKGEIVAELDINPDLWFFGCHFSGDPVMPGCLGLDALWQLVGFFLGWEGAEGKGRALGVGEVKFTGQVLPDAKKVTYKLTIKRKVYRKLVMGIADATMEVDGREIYSAKDLKVGIFTDTSSF</sequence>
<protein>
    <recommendedName>
        <fullName evidence="1">3-hydroxydecanoyl-[acyl-carrier-protein] dehydratase</fullName>
        <ecNumber evidence="1">4.2.1.59</ecNumber>
    </recommendedName>
    <alternativeName>
        <fullName evidence="1">3-hydroxyacyl-[acyl-carrier-protein] dehydratase FabA</fullName>
    </alternativeName>
    <alternativeName>
        <fullName evidence="1">Beta-hydroxydecanoyl thioester dehydrase</fullName>
    </alternativeName>
    <alternativeName>
        <fullName evidence="1">Trans-2-decenoyl-[acyl-carrier-protein] isomerase</fullName>
        <ecNumber evidence="1">5.3.3.14</ecNumber>
    </alternativeName>
</protein>
<organism>
    <name type="scientific">Shewanella sediminis (strain HAW-EB3)</name>
    <dbReference type="NCBI Taxonomy" id="425104"/>
    <lineage>
        <taxon>Bacteria</taxon>
        <taxon>Pseudomonadati</taxon>
        <taxon>Pseudomonadota</taxon>
        <taxon>Gammaproteobacteria</taxon>
        <taxon>Alteromonadales</taxon>
        <taxon>Shewanellaceae</taxon>
        <taxon>Shewanella</taxon>
    </lineage>
</organism>
<comment type="function">
    <text evidence="1">Necessary for the introduction of cis unsaturation into fatty acids. Catalyzes the dehydration of (3R)-3-hydroxydecanoyl-ACP to E-(2)-decenoyl-ACP and then its isomerization to Z-(3)-decenoyl-ACP. Can catalyze the dehydratase reaction for beta-hydroxyacyl-ACPs with saturated chain lengths up to 16:0, being most active on intermediate chain length.</text>
</comment>
<comment type="catalytic activity">
    <reaction evidence="1">
        <text>a (3R)-hydroxyacyl-[ACP] = a (2E)-enoyl-[ACP] + H2O</text>
        <dbReference type="Rhea" id="RHEA:13097"/>
        <dbReference type="Rhea" id="RHEA-COMP:9925"/>
        <dbReference type="Rhea" id="RHEA-COMP:9945"/>
        <dbReference type="ChEBI" id="CHEBI:15377"/>
        <dbReference type="ChEBI" id="CHEBI:78784"/>
        <dbReference type="ChEBI" id="CHEBI:78827"/>
        <dbReference type="EC" id="4.2.1.59"/>
    </reaction>
</comment>
<comment type="catalytic activity">
    <reaction evidence="1">
        <text>(3R)-hydroxydecanoyl-[ACP] = (2E)-decenoyl-[ACP] + H2O</text>
        <dbReference type="Rhea" id="RHEA:41860"/>
        <dbReference type="Rhea" id="RHEA-COMP:9638"/>
        <dbReference type="Rhea" id="RHEA-COMP:9639"/>
        <dbReference type="ChEBI" id="CHEBI:15377"/>
        <dbReference type="ChEBI" id="CHEBI:78466"/>
        <dbReference type="ChEBI" id="CHEBI:78467"/>
    </reaction>
</comment>
<comment type="catalytic activity">
    <reaction evidence="1">
        <text>(2E)-decenoyl-[ACP] = (3Z)-decenoyl-[ACP]</text>
        <dbReference type="Rhea" id="RHEA:23568"/>
        <dbReference type="Rhea" id="RHEA-COMP:9639"/>
        <dbReference type="Rhea" id="RHEA-COMP:9927"/>
        <dbReference type="ChEBI" id="CHEBI:78467"/>
        <dbReference type="ChEBI" id="CHEBI:78798"/>
        <dbReference type="EC" id="5.3.3.14"/>
    </reaction>
</comment>
<comment type="pathway">
    <text evidence="1">Lipid metabolism; fatty acid biosynthesis.</text>
</comment>
<comment type="subunit">
    <text evidence="1">Homodimer.</text>
</comment>
<comment type="subcellular location">
    <subcellularLocation>
        <location evidence="1">Cytoplasm</location>
    </subcellularLocation>
</comment>
<comment type="similarity">
    <text evidence="1">Belongs to the thioester dehydratase family. FabA subfamily.</text>
</comment>
<dbReference type="EC" id="4.2.1.59" evidence="1"/>
<dbReference type="EC" id="5.3.3.14" evidence="1"/>
<dbReference type="EMBL" id="CP000821">
    <property type="protein sequence ID" value="ABV37077.1"/>
    <property type="molecule type" value="Genomic_DNA"/>
</dbReference>
<dbReference type="RefSeq" id="WP_012142810.1">
    <property type="nucleotide sequence ID" value="NC_009831.1"/>
</dbReference>
<dbReference type="SMR" id="A8FW54"/>
<dbReference type="STRING" id="425104.Ssed_2468"/>
<dbReference type="KEGG" id="sse:Ssed_2468"/>
<dbReference type="eggNOG" id="COG0764">
    <property type="taxonomic scope" value="Bacteria"/>
</dbReference>
<dbReference type="HOGENOM" id="CLU_097925_0_0_6"/>
<dbReference type="OrthoDB" id="9786735at2"/>
<dbReference type="UniPathway" id="UPA00094"/>
<dbReference type="Proteomes" id="UP000002015">
    <property type="component" value="Chromosome"/>
</dbReference>
<dbReference type="GO" id="GO:0005737">
    <property type="term" value="C:cytoplasm"/>
    <property type="evidence" value="ECO:0007669"/>
    <property type="project" value="UniProtKB-SubCell"/>
</dbReference>
<dbReference type="GO" id="GO:0019171">
    <property type="term" value="F:(3R)-hydroxyacyl-[acyl-carrier-protein] dehydratase activity"/>
    <property type="evidence" value="ECO:0007669"/>
    <property type="project" value="UniProtKB-UniRule"/>
</dbReference>
<dbReference type="GO" id="GO:0034017">
    <property type="term" value="F:trans-2-decenoyl-acyl-carrier-protein isomerase activity"/>
    <property type="evidence" value="ECO:0007669"/>
    <property type="project" value="UniProtKB-UniRule"/>
</dbReference>
<dbReference type="GO" id="GO:0006636">
    <property type="term" value="P:unsaturated fatty acid biosynthetic process"/>
    <property type="evidence" value="ECO:0007669"/>
    <property type="project" value="UniProtKB-UniRule"/>
</dbReference>
<dbReference type="CDD" id="cd01287">
    <property type="entry name" value="FabA"/>
    <property type="match status" value="1"/>
</dbReference>
<dbReference type="Gene3D" id="3.10.129.10">
    <property type="entry name" value="Hotdog Thioesterase"/>
    <property type="match status" value="1"/>
</dbReference>
<dbReference type="HAMAP" id="MF_00405">
    <property type="entry name" value="FabA"/>
    <property type="match status" value="1"/>
</dbReference>
<dbReference type="InterPro" id="IPR010083">
    <property type="entry name" value="FabA"/>
</dbReference>
<dbReference type="InterPro" id="IPR013114">
    <property type="entry name" value="FabA_FabZ"/>
</dbReference>
<dbReference type="InterPro" id="IPR029069">
    <property type="entry name" value="HotDog_dom_sf"/>
</dbReference>
<dbReference type="NCBIfam" id="TIGR01749">
    <property type="entry name" value="fabA"/>
    <property type="match status" value="1"/>
</dbReference>
<dbReference type="NCBIfam" id="NF003509">
    <property type="entry name" value="PRK05174.1"/>
    <property type="match status" value="1"/>
</dbReference>
<dbReference type="PANTHER" id="PTHR30272">
    <property type="entry name" value="3-HYDROXYACYL-[ACYL-CARRIER-PROTEIN] DEHYDRATASE"/>
    <property type="match status" value="1"/>
</dbReference>
<dbReference type="PANTHER" id="PTHR30272:SF8">
    <property type="entry name" value="3-HYDROXYDECANOYL-[ACYL-CARRIER-PROTEIN] DEHYDRATASE"/>
    <property type="match status" value="1"/>
</dbReference>
<dbReference type="Pfam" id="PF07977">
    <property type="entry name" value="FabA"/>
    <property type="match status" value="1"/>
</dbReference>
<dbReference type="SUPFAM" id="SSF54637">
    <property type="entry name" value="Thioesterase/thiol ester dehydrase-isomerase"/>
    <property type="match status" value="1"/>
</dbReference>
<reference key="1">
    <citation type="submission" date="2007-08" db="EMBL/GenBank/DDBJ databases">
        <title>Complete sequence of Shewanella sediminis HAW-EB3.</title>
        <authorList>
            <consortium name="US DOE Joint Genome Institute"/>
            <person name="Copeland A."/>
            <person name="Lucas S."/>
            <person name="Lapidus A."/>
            <person name="Barry K."/>
            <person name="Glavina del Rio T."/>
            <person name="Dalin E."/>
            <person name="Tice H."/>
            <person name="Pitluck S."/>
            <person name="Chertkov O."/>
            <person name="Brettin T."/>
            <person name="Bruce D."/>
            <person name="Detter J.C."/>
            <person name="Han C."/>
            <person name="Schmutz J."/>
            <person name="Larimer F."/>
            <person name="Land M."/>
            <person name="Hauser L."/>
            <person name="Kyrpides N."/>
            <person name="Kim E."/>
            <person name="Zhao J.-S."/>
            <person name="Richardson P."/>
        </authorList>
    </citation>
    <scope>NUCLEOTIDE SEQUENCE [LARGE SCALE GENOMIC DNA]</scope>
    <source>
        <strain>HAW-EB3</strain>
    </source>
</reference>
<evidence type="ECO:0000255" key="1">
    <source>
        <dbReference type="HAMAP-Rule" id="MF_00405"/>
    </source>
</evidence>
<gene>
    <name evidence="1" type="primary">fabA</name>
    <name type="ordered locus">Ssed_2468</name>
</gene>